<reference key="1">
    <citation type="journal article" date="1992" name="Proc. Natl. Acad. Sci. U.S.A.">
        <title>Cloning and intracellular localization of the U2 small nuclear ribonucleoprotein auxiliary factor small subunit.</title>
        <authorList>
            <person name="Zhang M."/>
            <person name="Zamore P.D."/>
            <person name="Carmo-Fonseca M."/>
            <person name="Lamond A.I."/>
            <person name="Green M.R."/>
        </authorList>
    </citation>
    <scope>NUCLEOTIDE SEQUENCE [MRNA] (ISOFORM 1)</scope>
    <scope>PROTEIN SEQUENCE OF 68-89 AND 126-151</scope>
    <source>
        <tissue>Fetal brain</tissue>
    </source>
</reference>
<reference key="2">
    <citation type="journal article" date="2004" name="J. Biol. Chem.">
        <title>Diversity of vertebrate splicing factor U2AF35: identification of alternatively spliced U2AF1 mRNAs.</title>
        <authorList>
            <person name="Pacheco T.R.D."/>
            <person name="Gomes N.L."/>
            <person name="Benes V."/>
            <person name="Ansorge W."/>
            <person name="Wollerton M."/>
            <person name="Smith C.W."/>
            <person name="Valcarcel J."/>
            <person name="Carmo-Fonseca M."/>
        </authorList>
    </citation>
    <scope>NUCLEOTIDE SEQUENCE [MRNA] (ISOFORM 2)</scope>
    <scope>ALTERNATIVE SPLICING (ISOFORMS 1; 2 AND 3)</scope>
    <scope>SUBCELLULAR LOCATION</scope>
    <source>
        <tissue>Spleen</tissue>
    </source>
</reference>
<reference key="3">
    <citation type="journal article" date="2004" name="Proc. Natl. Acad. Sci. U.S.A.">
        <title>Large-scale cDNA transfection screening for genes related to cancer development and progression.</title>
        <authorList>
            <person name="Wan D."/>
            <person name="Gong Y."/>
            <person name="Qin W."/>
            <person name="Zhang P."/>
            <person name="Li J."/>
            <person name="Wei L."/>
            <person name="Zhou X."/>
            <person name="Li H."/>
            <person name="Qiu X."/>
            <person name="Zhong F."/>
            <person name="He L."/>
            <person name="Yu J."/>
            <person name="Yao G."/>
            <person name="Jiang H."/>
            <person name="Qian L."/>
            <person name="Yu Y."/>
            <person name="Shu H."/>
            <person name="Chen X."/>
            <person name="Xu H."/>
            <person name="Guo M."/>
            <person name="Pan Z."/>
            <person name="Chen Y."/>
            <person name="Ge C."/>
            <person name="Yang S."/>
            <person name="Gu J."/>
        </authorList>
    </citation>
    <scope>NUCLEOTIDE SEQUENCE [LARGE SCALE MRNA] (ISOFORM 4)</scope>
</reference>
<reference key="4">
    <citation type="journal article" date="2000" name="Nature">
        <title>The DNA sequence of human chromosome 21.</title>
        <authorList>
            <person name="Hattori M."/>
            <person name="Fujiyama A."/>
            <person name="Taylor T.D."/>
            <person name="Watanabe H."/>
            <person name="Yada T."/>
            <person name="Park H.-S."/>
            <person name="Toyoda A."/>
            <person name="Ishii K."/>
            <person name="Totoki Y."/>
            <person name="Choi D.-K."/>
            <person name="Groner Y."/>
            <person name="Soeda E."/>
            <person name="Ohki M."/>
            <person name="Takagi T."/>
            <person name="Sakaki Y."/>
            <person name="Taudien S."/>
            <person name="Blechschmidt K."/>
            <person name="Polley A."/>
            <person name="Menzel U."/>
            <person name="Delabar J."/>
            <person name="Kumpf K."/>
            <person name="Lehmann R."/>
            <person name="Patterson D."/>
            <person name="Reichwald K."/>
            <person name="Rump A."/>
            <person name="Schillhabel M."/>
            <person name="Schudy A."/>
            <person name="Zimmermann W."/>
            <person name="Rosenthal A."/>
            <person name="Kudoh J."/>
            <person name="Shibuya K."/>
            <person name="Kawasaki K."/>
            <person name="Asakawa S."/>
            <person name="Shintani A."/>
            <person name="Sasaki T."/>
            <person name="Nagamine K."/>
            <person name="Mitsuyama S."/>
            <person name="Antonarakis S.E."/>
            <person name="Minoshima S."/>
            <person name="Shimizu N."/>
            <person name="Nordsiek G."/>
            <person name="Hornischer K."/>
            <person name="Brandt P."/>
            <person name="Scharfe M."/>
            <person name="Schoen O."/>
            <person name="Desario A."/>
            <person name="Reichelt J."/>
            <person name="Kauer G."/>
            <person name="Bloecker H."/>
            <person name="Ramser J."/>
            <person name="Beck A."/>
            <person name="Klages S."/>
            <person name="Hennig S."/>
            <person name="Riesselmann L."/>
            <person name="Dagand E."/>
            <person name="Wehrmeyer S."/>
            <person name="Borzym K."/>
            <person name="Gardiner K."/>
            <person name="Nizetic D."/>
            <person name="Francis F."/>
            <person name="Lehrach H."/>
            <person name="Reinhardt R."/>
            <person name="Yaspo M.-L."/>
        </authorList>
    </citation>
    <scope>NUCLEOTIDE SEQUENCE [LARGE SCALE GENOMIC DNA]</scope>
</reference>
<reference key="5">
    <citation type="submission" date="2005-09" db="EMBL/GenBank/DDBJ databases">
        <authorList>
            <person name="Mural R.J."/>
            <person name="Istrail S."/>
            <person name="Sutton G.G."/>
            <person name="Florea L."/>
            <person name="Halpern A.L."/>
            <person name="Mobarry C.M."/>
            <person name="Lippert R."/>
            <person name="Walenz B."/>
            <person name="Shatkay H."/>
            <person name="Dew I."/>
            <person name="Miller J.R."/>
            <person name="Flanigan M.J."/>
            <person name="Edwards N.J."/>
            <person name="Bolanos R."/>
            <person name="Fasulo D."/>
            <person name="Halldorsson B.V."/>
            <person name="Hannenhalli S."/>
            <person name="Turner R."/>
            <person name="Yooseph S."/>
            <person name="Lu F."/>
            <person name="Nusskern D.R."/>
            <person name="Shue B.C."/>
            <person name="Zheng X.H."/>
            <person name="Zhong F."/>
            <person name="Delcher A.L."/>
            <person name="Huson D.H."/>
            <person name="Kravitz S.A."/>
            <person name="Mouchard L."/>
            <person name="Reinert K."/>
            <person name="Remington K.A."/>
            <person name="Clark A.G."/>
            <person name="Waterman M.S."/>
            <person name="Eichler E.E."/>
            <person name="Adams M.D."/>
            <person name="Hunkapiller M.W."/>
            <person name="Myers E.W."/>
            <person name="Venter J.C."/>
        </authorList>
    </citation>
    <scope>NUCLEOTIDE SEQUENCE [LARGE SCALE GENOMIC DNA]</scope>
</reference>
<reference key="6">
    <citation type="journal article" date="2004" name="Genome Res.">
        <title>The status, quality, and expansion of the NIH full-length cDNA project: the Mammalian Gene Collection (MGC).</title>
        <authorList>
            <consortium name="The MGC Project Team"/>
        </authorList>
    </citation>
    <scope>NUCLEOTIDE SEQUENCE [LARGE SCALE MRNA] (ISOFORM 1)</scope>
    <source>
        <tissue>Lung</tissue>
    </source>
</reference>
<reference key="7">
    <citation type="submission" date="2005-07" db="UniProtKB">
        <authorList>
            <person name="Bienvenut W.V."/>
        </authorList>
    </citation>
    <scope>PROTEIN SEQUENCE OF 2-13</scope>
    <scope>CLEAVAGE OF INITIATOR METHIONINE</scope>
    <scope>ACETYLATION AT ALA-2</scope>
    <scope>IDENTIFICATION BY MASS SPECTROMETRY</scope>
    <source>
        <tissue>B-cell lymphoma</tissue>
    </source>
</reference>
<reference key="8">
    <citation type="journal article" date="1996" name="Genes Dev.">
        <title>The splicing factor U2AF35 mediates critical protein-protein interactions in constitutive and enhancer-dependent splicing.</title>
        <authorList>
            <person name="Zuo P."/>
            <person name="Maniatis T."/>
        </authorList>
    </citation>
    <scope>FUNCTION</scope>
</reference>
<reference key="9">
    <citation type="journal article" date="2001" name="J. Cell Biol.">
        <title>ZNF265 -- a novel spliceosomal protein able to induce alternative splicing.</title>
        <authorList>
            <person name="Adams D.J."/>
            <person name="van der Weyden L."/>
            <person name="Mayeda A."/>
            <person name="Stamm S."/>
            <person name="Morris B.J."/>
            <person name="Rasko J.E.J."/>
        </authorList>
    </citation>
    <scope>INTERACTION WITH ZRANB2</scope>
</reference>
<reference key="10">
    <citation type="journal article" date="2002" name="RNA">
        <title>Purification and characterization of native spliceosomes suitable for three-dimensional structural analysis.</title>
        <authorList>
            <person name="Jurica M.S."/>
            <person name="Licklider L.J."/>
            <person name="Gygi S.P."/>
            <person name="Grigorieff N."/>
            <person name="Moore M.J."/>
        </authorList>
    </citation>
    <scope>IDENTIFICATION BY MASS SPECTROMETRY</scope>
    <scope>IDENTIFICATION IN THE SPLICEOSOMAL C COMPLEX</scope>
</reference>
<reference key="11">
    <citation type="journal article" date="2003" name="Nature">
        <title>Proteomic characterization of the human centrosome by protein correlation profiling.</title>
        <authorList>
            <person name="Andersen J.S."/>
            <person name="Wilkinson C.J."/>
            <person name="Mayor T."/>
            <person name="Mortensen P."/>
            <person name="Nigg E.A."/>
            <person name="Mann M."/>
        </authorList>
    </citation>
    <scope>IDENTIFICATION BY MASS SPECTROMETRY</scope>
    <source>
        <tissue>Lymphoblast</tissue>
    </source>
</reference>
<reference key="12">
    <citation type="journal article" date="2007" name="Science">
        <title>ATM and ATR substrate analysis reveals extensive protein networks responsive to DNA damage.</title>
        <authorList>
            <person name="Matsuoka S."/>
            <person name="Ballif B.A."/>
            <person name="Smogorzewska A."/>
            <person name="McDonald E.R. III"/>
            <person name="Hurov K.E."/>
            <person name="Luo J."/>
            <person name="Bakalarski C.E."/>
            <person name="Zhao Z."/>
            <person name="Solimini N."/>
            <person name="Lerenthal Y."/>
            <person name="Shiloh Y."/>
            <person name="Gygi S.P."/>
            <person name="Elledge S.J."/>
        </authorList>
    </citation>
    <scope>IDENTIFICATION BY MASS SPECTROMETRY [LARGE SCALE ANALYSIS]</scope>
    <source>
        <tissue>Embryonic kidney</tissue>
    </source>
</reference>
<reference key="13">
    <citation type="journal article" date="2010" name="Sci. Signal.">
        <title>Quantitative phosphoproteomics reveals widespread full phosphorylation site occupancy during mitosis.</title>
        <authorList>
            <person name="Olsen J.V."/>
            <person name="Vermeulen M."/>
            <person name="Santamaria A."/>
            <person name="Kumar C."/>
            <person name="Miller M.L."/>
            <person name="Jensen L.J."/>
            <person name="Gnad F."/>
            <person name="Cox J."/>
            <person name="Jensen T.S."/>
            <person name="Nigg E.A."/>
            <person name="Brunak S."/>
            <person name="Mann M."/>
        </authorList>
    </citation>
    <scope>IDENTIFICATION BY MASS SPECTROMETRY [LARGE SCALE ANALYSIS]</scope>
    <source>
        <tissue>Cervix carcinoma</tissue>
    </source>
</reference>
<reference key="14">
    <citation type="journal article" date="2011" name="BMC Syst. Biol.">
        <title>Initial characterization of the human central proteome.</title>
        <authorList>
            <person name="Burkard T.R."/>
            <person name="Planyavsky M."/>
            <person name="Kaupe I."/>
            <person name="Breitwieser F.P."/>
            <person name="Buerckstuemmer T."/>
            <person name="Bennett K.L."/>
            <person name="Superti-Furga G."/>
            <person name="Colinge J."/>
        </authorList>
    </citation>
    <scope>IDENTIFICATION BY MASS SPECTROMETRY [LARGE SCALE ANALYSIS]</scope>
</reference>
<reference key="15">
    <citation type="journal article" date="2011" name="Nat. Genet.">
        <title>Recurrent mutations in the U2AF1 splicing factor in myelodysplastic syndromes.</title>
        <authorList>
            <person name="Graubert T.A."/>
            <person name="Shen D."/>
            <person name="Ding L."/>
            <person name="Okeyo-Owuor T."/>
            <person name="Lunn C.L."/>
            <person name="Shao J."/>
            <person name="Krysiak K."/>
            <person name="Harris C.C."/>
            <person name="Koboldt D.C."/>
            <person name="Larson D.E."/>
            <person name="McLellan M.D."/>
            <person name="Dooling D.J."/>
            <person name="Abbott R.M."/>
            <person name="Fulton R.S."/>
            <person name="Schmidt H."/>
            <person name="Kalicki-Veizer J."/>
            <person name="O'Laughlin M."/>
            <person name="Grillot M."/>
            <person name="Baty J."/>
            <person name="Heath S."/>
            <person name="Frater J.L."/>
            <person name="Nasim T."/>
            <person name="Link D.C."/>
            <person name="Tomasson M.H."/>
            <person name="Westervelt P."/>
            <person name="DiPersio J.F."/>
            <person name="Mardis E.R."/>
            <person name="Ley T.J."/>
            <person name="Wilson R.K."/>
            <person name="Walter M.J."/>
        </authorList>
    </citation>
    <scope>FUNCTION</scope>
    <scope>INVOLVEMENT IN MDS</scope>
    <scope>VARIANTS MDS PHE-34; TYR-34 AND ARG-157</scope>
    <scope>CHARACTERIZATION OF VARIANT MDS PHE-34</scope>
</reference>
<reference key="16">
    <citation type="journal article" date="2011" name="Sci. Signal.">
        <title>System-wide temporal characterization of the proteome and phosphoproteome of human embryonic stem cell differentiation.</title>
        <authorList>
            <person name="Rigbolt K.T."/>
            <person name="Prokhorova T.A."/>
            <person name="Akimov V."/>
            <person name="Henningsen J."/>
            <person name="Johansen P.T."/>
            <person name="Kratchmarova I."/>
            <person name="Kassem M."/>
            <person name="Mann M."/>
            <person name="Olsen J.V."/>
            <person name="Blagoev B."/>
        </authorList>
    </citation>
    <scope>PHOSPHORYLATION [LARGE SCALE ANALYSIS] AT SER-61</scope>
    <scope>IDENTIFICATION BY MASS SPECTROMETRY [LARGE SCALE ANALYSIS]</scope>
</reference>
<reference key="17">
    <citation type="journal article" date="2013" name="J. Proteome Res.">
        <title>Toward a comprehensive characterization of a human cancer cell phosphoproteome.</title>
        <authorList>
            <person name="Zhou H."/>
            <person name="Di Palma S."/>
            <person name="Preisinger C."/>
            <person name="Peng M."/>
            <person name="Polat A.N."/>
            <person name="Heck A.J."/>
            <person name="Mohammed S."/>
        </authorList>
    </citation>
    <scope>PHOSPHORYLATION [LARGE SCALE ANALYSIS] AT SER-145</scope>
    <scope>IDENTIFICATION BY MASS SPECTROMETRY [LARGE SCALE ANALYSIS]</scope>
    <source>
        <tissue>Erythroleukemia</tissue>
    </source>
</reference>
<reference key="18">
    <citation type="journal article" date="2014" name="Mol. Cell. Proteomics">
        <title>Immunoaffinity enrichment and mass spectrometry analysis of protein methylation.</title>
        <authorList>
            <person name="Guo A."/>
            <person name="Gu H."/>
            <person name="Zhou J."/>
            <person name="Mulhern D."/>
            <person name="Wang Y."/>
            <person name="Lee K.A."/>
            <person name="Yang V."/>
            <person name="Aguiar M."/>
            <person name="Kornhauser J."/>
            <person name="Jia X."/>
            <person name="Ren J."/>
            <person name="Beausoleil S.A."/>
            <person name="Silva J.C."/>
            <person name="Vemulapalli V."/>
            <person name="Bedford M.T."/>
            <person name="Comb M.J."/>
        </authorList>
    </citation>
    <scope>METHYLATION [LARGE SCALE ANALYSIS] AT LYS-39 AND ARG-165</scope>
    <scope>METHYLATION [LARGE SCALE ANALYSIS] AT LYS-39 (ISOFORMS 2 AND 3)</scope>
    <scope>IDENTIFICATION BY MASS SPECTROMETRY [LARGE SCALE ANALYSIS]</scope>
    <source>
        <tissue>Colon carcinoma</tissue>
    </source>
</reference>
<reference key="19">
    <citation type="journal article" date="2015" name="Leukemia">
        <title>U2AF1 mutations alter sequence specificity of pre-mRNA binding and splicing.</title>
        <authorList>
            <person name="Okeyo-Owuor T."/>
            <person name="White B.S."/>
            <person name="Chatrikhi R."/>
            <person name="Mohan D.R."/>
            <person name="Kim S."/>
            <person name="Griffith M."/>
            <person name="Ding L."/>
            <person name="Ketkar-Kulkarni S."/>
            <person name="Hundal J."/>
            <person name="Laird K.M."/>
            <person name="Kielkopf C.L."/>
            <person name="Ley T.J."/>
            <person name="Walter M.J."/>
            <person name="Graubert T.A."/>
        </authorList>
    </citation>
    <scope>FUNCTION</scope>
    <scope>INVOLVEMENT IN MDS</scope>
    <scope>SUBCELLULAR LOCATION</scope>
    <scope>CHARACTERIZATION OF VARIANTS MDS PHE-34; TYR-34 AND ARG-157</scope>
</reference>
<reference key="20">
    <citation type="journal article" date="2015" name="Proteomics">
        <title>N-terminome analysis of the human mitochondrial proteome.</title>
        <authorList>
            <person name="Vaca Jacome A.S."/>
            <person name="Rabilloud T."/>
            <person name="Schaeffer-Reiss C."/>
            <person name="Rompais M."/>
            <person name="Ayoub D."/>
            <person name="Lane L."/>
            <person name="Bairoch A."/>
            <person name="Van Dorsselaer A."/>
            <person name="Carapito C."/>
        </authorList>
    </citation>
    <scope>IDENTIFICATION BY MASS SPECTROMETRY [LARGE SCALE ANALYSIS]</scope>
</reference>
<reference key="21">
    <citation type="journal article" date="2021" name="Nucleic Acids Res.">
        <title>SDE2 is an essential gene required for ribosome biogenesis and the regulation of alternative splicing.</title>
        <authorList>
            <person name="Floro J."/>
            <person name="Dai A."/>
            <person name="Metzger A."/>
            <person name="Mora-Martin A."/>
            <person name="Ganem N.J."/>
            <person name="Cifuentes D."/>
            <person name="Wu C.S."/>
            <person name="Dalal J."/>
            <person name="Lyons S.M."/>
            <person name="Labadorf A."/>
            <person name="Flynn R.L."/>
        </authorList>
    </citation>
    <scope>INTERACTION WITH SDE2 AND SF3B1</scope>
</reference>
<reference key="22">
    <citation type="journal article" date="2001" name="Cell">
        <title>A novel peptide recognition mode revealed by the X-ray structure of a core U2AF35/U2AF65 heterodimer.</title>
        <authorList>
            <person name="Kielkopf C.L."/>
            <person name="Rodionova N.A."/>
            <person name="Green M.R."/>
            <person name="Burley S.K."/>
        </authorList>
    </citation>
    <scope>X-RAY CRYSTALLOGRAPHY (2.2 ANGSTROMS) OF 43-146 IN COMPLEX WITH U2AF2</scope>
    <scope>MUTAGENESIS OF TRP-134</scope>
</reference>
<name>U2AF1_HUMAN</name>
<protein>
    <recommendedName>
        <fullName>Splicing factor U2AF 35 kDa subunit</fullName>
    </recommendedName>
    <alternativeName>
        <fullName>U2 auxiliary factor 35 kDa subunit</fullName>
    </alternativeName>
    <alternativeName>
        <fullName>U2 small nuclear RNA auxiliary factor 1</fullName>
    </alternativeName>
    <alternativeName>
        <fullName>U2 snRNP auxiliary factor small subunit</fullName>
    </alternativeName>
</protein>
<proteinExistence type="evidence at protein level"/>
<feature type="initiator methionine" description="Removed" evidence="13">
    <location>
        <position position="1"/>
    </location>
</feature>
<feature type="chain" id="PRO_0000081994" description="Splicing factor U2AF 35 kDa subunit">
    <location>
        <begin position="2"/>
        <end position="240"/>
    </location>
</feature>
<feature type="domain" description="RRM" evidence="2">
    <location>
        <begin position="65"/>
        <end position="147"/>
    </location>
</feature>
<feature type="zinc finger region" description="C3H1-type 1" evidence="3">
    <location>
        <begin position="12"/>
        <end position="40"/>
    </location>
</feature>
<feature type="zinc finger region" description="C3H1-type 2" evidence="3">
    <location>
        <begin position="149"/>
        <end position="176"/>
    </location>
</feature>
<feature type="region of interest" description="Disordered" evidence="4">
    <location>
        <begin position="183"/>
        <end position="240"/>
    </location>
</feature>
<feature type="compositionally biased region" description="Basic residues" evidence="4">
    <location>
        <begin position="188"/>
        <end position="208"/>
    </location>
</feature>
<feature type="compositionally biased region" description="Gly residues" evidence="4">
    <location>
        <begin position="212"/>
        <end position="222"/>
    </location>
</feature>
<feature type="compositionally biased region" description="Basic and acidic residues" evidence="4">
    <location>
        <begin position="223"/>
        <end position="240"/>
    </location>
</feature>
<feature type="modified residue" description="N-acetylalanine" evidence="13">
    <location>
        <position position="2"/>
    </location>
</feature>
<feature type="modified residue" description="N6-methyllysine" evidence="19">
    <location>
        <position position="39"/>
    </location>
</feature>
<feature type="modified residue" description="Phosphoserine" evidence="17">
    <location>
        <position position="61"/>
    </location>
</feature>
<feature type="modified residue" description="Phosphoserine" evidence="18">
    <location>
        <position position="145"/>
    </location>
</feature>
<feature type="modified residue" description="Omega-N-methylarginine" evidence="19">
    <location>
        <position position="165"/>
    </location>
</feature>
<feature type="splice variant" id="VSP_042664" description="In isoform 4." evidence="15">
    <location>
        <begin position="1"/>
        <end position="73"/>
    </location>
</feature>
<feature type="splice variant" id="VSP_042665" description="In isoform 2 and isoform 3." evidence="14">
    <original>ALLNIYRNPQNSSQSADGLR</original>
    <variation>LIQNIYRNPQNSAQTADGSH</variation>
    <location>
        <begin position="47"/>
        <end position="66"/>
    </location>
</feature>
<feature type="splice variant" id="VSP_042666" description="In isoform 3." evidence="16">
    <original>CAVSDVEMQ</original>
    <variation>YHCPLEHLP</variation>
    <location>
        <begin position="67"/>
        <end position="75"/>
    </location>
</feature>
<feature type="splice variant" id="VSP_042667" description="In isoform 3." evidence="16">
    <location>
        <begin position="76"/>
        <end position="240"/>
    </location>
</feature>
<feature type="sequence variant" id="VAR_079637" description="In MDS; somatic mutation; affects alternative splicing of target sequences resulting in increased splicing efficiency, exon skipping and alternative splice site utilization; no effect on localization to nuclear speckles; dbSNP:rs371769427." evidence="9 10">
    <original>S</original>
    <variation>F</variation>
    <location>
        <position position="34"/>
    </location>
</feature>
<feature type="sequence variant" id="VAR_079638" description="In MDS; somatic mutation; affects alternative splicing of target sequences; dbSNP:rs371769427." evidence="9 10">
    <original>S</original>
    <variation>Y</variation>
    <location>
        <position position="34"/>
    </location>
</feature>
<feature type="sequence variant" id="VAR_079639" description="In MDS; somatic mutation; affects alternative splicing of target sequences; dbSNP:rs371246226." evidence="9 10">
    <original>Q</original>
    <variation>R</variation>
    <location>
        <position position="157"/>
    </location>
</feature>
<feature type="mutagenesis site" description="Decreases affinity for UAF2 by 3 orders of magnitude." evidence="6">
    <original>W</original>
    <variation>A</variation>
    <location>
        <position position="134"/>
    </location>
</feature>
<feature type="strand" evidence="20">
    <location>
        <begin position="45"/>
        <end position="53"/>
    </location>
</feature>
<feature type="helix" evidence="20">
    <location>
        <begin position="64"/>
        <end position="92"/>
    </location>
</feature>
<feature type="strand" evidence="20">
    <location>
        <begin position="96"/>
        <end position="101"/>
    </location>
</feature>
<feature type="strand" evidence="20">
    <location>
        <begin position="104"/>
        <end position="118"/>
    </location>
</feature>
<feature type="helix" evidence="20">
    <location>
        <begin position="120"/>
        <end position="130"/>
    </location>
</feature>
<feature type="strand" evidence="20">
    <location>
        <begin position="142"/>
        <end position="144"/>
    </location>
</feature>
<feature type="modified residue" description="N6-methyllysine" evidence="19">
    <location sequence="Q01081-2">
        <position position="39"/>
    </location>
</feature>
<feature type="modified residue" description="N6-methyllysine" evidence="19">
    <location sequence="Q01081-3">
        <position position="39"/>
    </location>
</feature>
<evidence type="ECO:0000250" key="1"/>
<evidence type="ECO:0000255" key="2">
    <source>
        <dbReference type="PROSITE-ProRule" id="PRU00176"/>
    </source>
</evidence>
<evidence type="ECO:0000255" key="3">
    <source>
        <dbReference type="PROSITE-ProRule" id="PRU00723"/>
    </source>
</evidence>
<evidence type="ECO:0000256" key="4">
    <source>
        <dbReference type="SAM" id="MobiDB-lite"/>
    </source>
</evidence>
<evidence type="ECO:0000269" key="5">
    <source>
    </source>
</evidence>
<evidence type="ECO:0000269" key="6">
    <source>
    </source>
</evidence>
<evidence type="ECO:0000269" key="7">
    <source>
    </source>
</evidence>
<evidence type="ECO:0000269" key="8">
    <source>
    </source>
</evidence>
<evidence type="ECO:0000269" key="9">
    <source>
    </source>
</evidence>
<evidence type="ECO:0000269" key="10">
    <source>
    </source>
</evidence>
<evidence type="ECO:0000269" key="11">
    <source>
    </source>
</evidence>
<evidence type="ECO:0000269" key="12">
    <source>
    </source>
</evidence>
<evidence type="ECO:0000269" key="13">
    <source ref="7"/>
</evidence>
<evidence type="ECO:0000303" key="14">
    <source>
    </source>
</evidence>
<evidence type="ECO:0000303" key="15">
    <source>
    </source>
</evidence>
<evidence type="ECO:0000305" key="16"/>
<evidence type="ECO:0007744" key="17">
    <source>
    </source>
</evidence>
<evidence type="ECO:0007744" key="18">
    <source>
    </source>
</evidence>
<evidence type="ECO:0007744" key="19">
    <source>
    </source>
</evidence>
<evidence type="ECO:0007829" key="20">
    <source>
        <dbReference type="PDB" id="1JMT"/>
    </source>
</evidence>
<organism>
    <name type="scientific">Homo sapiens</name>
    <name type="common">Human</name>
    <dbReference type="NCBI Taxonomy" id="9606"/>
    <lineage>
        <taxon>Eukaryota</taxon>
        <taxon>Metazoa</taxon>
        <taxon>Chordata</taxon>
        <taxon>Craniata</taxon>
        <taxon>Vertebrata</taxon>
        <taxon>Euteleostomi</taxon>
        <taxon>Mammalia</taxon>
        <taxon>Eutheria</taxon>
        <taxon>Euarchontoglires</taxon>
        <taxon>Primates</taxon>
        <taxon>Haplorrhini</taxon>
        <taxon>Catarrhini</taxon>
        <taxon>Hominidae</taxon>
        <taxon>Homo</taxon>
    </lineage>
</organism>
<sequence length="240" mass="27872">MAEYLASIFGTEKDKVNCSFYFKIGACRHGDRCSRLHNKPTFSQTIALLNIYRNPQNSSQSADGLRCAVSDVEMQEHYDEFFEEVFTEMEEKYGEVEEMNVCDNLGDHLVGNVYVKFRREEDAEKAVIDLNNRWFNGQPIHAELSPVTDFREACCRQYEMGECTRGGFCNFMHLKPISRELRRELYGRRRKKHRSRSRSRERRSRSRDRGRGGGGGGGGGGGGRERDRRRSRDRERSGRF</sequence>
<keyword id="KW-0002">3D-structure</keyword>
<keyword id="KW-0007">Acetylation</keyword>
<keyword id="KW-0025">Alternative splicing</keyword>
<keyword id="KW-0903">Direct protein sequencing</keyword>
<keyword id="KW-0225">Disease variant</keyword>
<keyword id="KW-0479">Metal-binding</keyword>
<keyword id="KW-0488">Methylation</keyword>
<keyword id="KW-0507">mRNA processing</keyword>
<keyword id="KW-0508">mRNA splicing</keyword>
<keyword id="KW-0539">Nucleus</keyword>
<keyword id="KW-0597">Phosphoprotein</keyword>
<keyword id="KW-1267">Proteomics identification</keyword>
<keyword id="KW-1185">Reference proteome</keyword>
<keyword id="KW-0677">Repeat</keyword>
<keyword id="KW-0694">RNA-binding</keyword>
<keyword id="KW-0747">Spliceosome</keyword>
<keyword id="KW-0862">Zinc</keyword>
<keyword id="KW-0863">Zinc-finger</keyword>
<dbReference type="EMBL" id="M96982">
    <property type="protein sequence ID" value="AAA36619.1"/>
    <property type="molecule type" value="mRNA"/>
</dbReference>
<dbReference type="EMBL" id="AJ627978">
    <property type="protein sequence ID" value="CAF29556.1"/>
    <property type="molecule type" value="mRNA"/>
</dbReference>
<dbReference type="EMBL" id="AF370386">
    <property type="protein sequence ID" value="AAQ15222.1"/>
    <property type="molecule type" value="mRNA"/>
</dbReference>
<dbReference type="EMBL" id="AP001631">
    <property type="status" value="NOT_ANNOTATED_CDS"/>
    <property type="molecule type" value="Genomic_DNA"/>
</dbReference>
<dbReference type="EMBL" id="AP001748">
    <property type="protein sequence ID" value="BAA95534.1"/>
    <property type="molecule type" value="Genomic_DNA"/>
</dbReference>
<dbReference type="EMBL" id="CH471079">
    <property type="protein sequence ID" value="EAX09501.1"/>
    <property type="molecule type" value="Genomic_DNA"/>
</dbReference>
<dbReference type="EMBL" id="CH471079">
    <property type="protein sequence ID" value="EAX09502.1"/>
    <property type="molecule type" value="Genomic_DNA"/>
</dbReference>
<dbReference type="EMBL" id="CH471079">
    <property type="protein sequence ID" value="EAX09504.1"/>
    <property type="molecule type" value="Genomic_DNA"/>
</dbReference>
<dbReference type="EMBL" id="CH471079">
    <property type="protein sequence ID" value="EAX09505.1"/>
    <property type="molecule type" value="Genomic_DNA"/>
</dbReference>
<dbReference type="EMBL" id="BC001177">
    <property type="protein sequence ID" value="AAH01177.1"/>
    <property type="molecule type" value="mRNA"/>
</dbReference>
<dbReference type="EMBL" id="BC001923">
    <property type="protein sequence ID" value="AAH01923.1"/>
    <property type="molecule type" value="mRNA"/>
</dbReference>
<dbReference type="CCDS" id="CCDS13694.1">
    <molecule id="Q01081-1"/>
</dbReference>
<dbReference type="CCDS" id="CCDS33574.1">
    <molecule id="Q01081-2"/>
</dbReference>
<dbReference type="CCDS" id="CCDS42948.1">
    <molecule id="Q01081-4"/>
</dbReference>
<dbReference type="PIR" id="A46179">
    <property type="entry name" value="A46179"/>
</dbReference>
<dbReference type="RefSeq" id="NP_001020374.1">
    <molecule id="Q01081-2"/>
    <property type="nucleotide sequence ID" value="NM_001025203.1"/>
</dbReference>
<dbReference type="RefSeq" id="NP_001020375.1">
    <molecule id="Q01081-4"/>
    <property type="nucleotide sequence ID" value="NM_001025204.2"/>
</dbReference>
<dbReference type="RefSeq" id="NP_001307575.1">
    <molecule id="Q01081-1"/>
    <property type="nucleotide sequence ID" value="NM_001320646.1"/>
</dbReference>
<dbReference type="RefSeq" id="NP_001307577.1">
    <molecule id="Q01081-2"/>
    <property type="nucleotide sequence ID" value="NM_001320648.1"/>
</dbReference>
<dbReference type="RefSeq" id="NP_001307580.1">
    <molecule id="Q01081-4"/>
    <property type="nucleotide sequence ID" value="NM_001320651.1"/>
</dbReference>
<dbReference type="RefSeq" id="NP_006749.1">
    <molecule id="Q01081-1"/>
    <property type="nucleotide sequence ID" value="NM_006758.3"/>
</dbReference>
<dbReference type="RefSeq" id="XP_024307897.1">
    <molecule id="Q01081-4"/>
    <property type="nucleotide sequence ID" value="XM_024452129.2"/>
</dbReference>
<dbReference type="RefSeq" id="XP_024307898.1">
    <molecule id="Q01081-4"/>
    <property type="nucleotide sequence ID" value="XM_024452130.2"/>
</dbReference>
<dbReference type="RefSeq" id="XP_024307899.1">
    <molecule id="Q01081-4"/>
    <property type="nucleotide sequence ID" value="XM_024452131.2"/>
</dbReference>
<dbReference type="RefSeq" id="XP_054180814.1">
    <molecule id="Q01081-4"/>
    <property type="nucleotide sequence ID" value="XM_054324839.1"/>
</dbReference>
<dbReference type="RefSeq" id="XP_054180815.1">
    <molecule id="Q01081-4"/>
    <property type="nucleotide sequence ID" value="XM_054324840.1"/>
</dbReference>
<dbReference type="RefSeq" id="XP_054180816.1">
    <molecule id="Q01081-4"/>
    <property type="nucleotide sequence ID" value="XM_054324841.1"/>
</dbReference>
<dbReference type="PDB" id="1JMT">
    <property type="method" value="X-ray"/>
    <property type="resolution" value="2.20 A"/>
    <property type="chains" value="A=43-146"/>
</dbReference>
<dbReference type="PDBsum" id="1JMT"/>
<dbReference type="SMR" id="Q01081"/>
<dbReference type="BioGRID" id="113157">
    <property type="interactions" value="242"/>
</dbReference>
<dbReference type="BioGRID" id="3195698">
    <property type="interactions" value="52"/>
</dbReference>
<dbReference type="ComplexPortal" id="CPX-1921">
    <property type="entry name" value="U2 small nuclear ribonucleoprotein auxiliary factor complex"/>
</dbReference>
<dbReference type="CORUM" id="Q01081"/>
<dbReference type="DIP" id="DIP-1108N"/>
<dbReference type="FunCoup" id="Q01081">
    <property type="interactions" value="1534"/>
</dbReference>
<dbReference type="IntAct" id="Q01081">
    <property type="interactions" value="221"/>
</dbReference>
<dbReference type="MINT" id="Q01081"/>
<dbReference type="STRING" id="9606.ENSP00000291552"/>
<dbReference type="GlyGen" id="Q01081">
    <property type="glycosylation" value="1 site, 1 O-linked glycan (1 site)"/>
</dbReference>
<dbReference type="iPTMnet" id="Q01081"/>
<dbReference type="PhosphoSitePlus" id="Q01081"/>
<dbReference type="SwissPalm" id="Q01081"/>
<dbReference type="BioMuta" id="U2AF1"/>
<dbReference type="DMDM" id="267187"/>
<dbReference type="jPOST" id="Q01081"/>
<dbReference type="MassIVE" id="Q01081"/>
<dbReference type="PaxDb" id="9606-ENSP00000291552"/>
<dbReference type="PeptideAtlas" id="Q01081"/>
<dbReference type="ProteomicsDB" id="57906">
    <molecule id="Q01081-1"/>
</dbReference>
<dbReference type="ProteomicsDB" id="57907">
    <molecule id="Q01081-2"/>
</dbReference>
<dbReference type="ProteomicsDB" id="57908">
    <molecule id="Q01081-3"/>
</dbReference>
<dbReference type="ProteomicsDB" id="57909">
    <molecule id="Q01081-4"/>
</dbReference>
<dbReference type="Pumba" id="Q01081"/>
<dbReference type="Antibodypedia" id="23951">
    <property type="antibodies" value="233 antibodies from 32 providers"/>
</dbReference>
<dbReference type="DNASU" id="7307"/>
<dbReference type="Ensembl" id="ENST00000291552.9">
    <molecule id="Q01081-1"/>
    <property type="protein sequence ID" value="ENSP00000291552.4"/>
    <property type="gene ID" value="ENSG00000160201.12"/>
</dbReference>
<dbReference type="Ensembl" id="ENST00000380276.6">
    <molecule id="Q01081-2"/>
    <property type="protein sequence ID" value="ENSP00000369629.2"/>
    <property type="gene ID" value="ENSG00000160201.12"/>
</dbReference>
<dbReference type="Ensembl" id="ENST00000459639.5">
    <molecule id="Q01081-4"/>
    <property type="protein sequence ID" value="ENSP00000418705.1"/>
    <property type="gene ID" value="ENSG00000160201.12"/>
</dbReference>
<dbReference type="Ensembl" id="ENST00000464750.5">
    <molecule id="Q01081-3"/>
    <property type="protein sequence ID" value="ENSP00000420672.1"/>
    <property type="gene ID" value="ENSG00000160201.12"/>
</dbReference>
<dbReference type="GeneID" id="7307"/>
<dbReference type="KEGG" id="hsa:102724594"/>
<dbReference type="KEGG" id="hsa:7307"/>
<dbReference type="MANE-Select" id="ENST00000291552.9">
    <property type="protein sequence ID" value="ENSP00000291552.4"/>
    <property type="RefSeq nucleotide sequence ID" value="NM_006758.3"/>
    <property type="RefSeq protein sequence ID" value="NP_006749.1"/>
</dbReference>
<dbReference type="UCSC" id="uc002zcy.1">
    <molecule id="Q01081-1"/>
    <property type="organism name" value="human"/>
</dbReference>
<dbReference type="AGR" id="HGNC:12453"/>
<dbReference type="CTD" id="7307"/>
<dbReference type="DisGeNET" id="102724594"/>
<dbReference type="DisGeNET" id="7307"/>
<dbReference type="GeneCards" id="U2AF1"/>
<dbReference type="HGNC" id="HGNC:12453">
    <property type="gene designation" value="U2AF1"/>
</dbReference>
<dbReference type="HPA" id="ENSG00000160201">
    <property type="expression patterns" value="Low tissue specificity"/>
</dbReference>
<dbReference type="MalaCards" id="U2AF1"/>
<dbReference type="MIM" id="191317">
    <property type="type" value="gene"/>
</dbReference>
<dbReference type="MIM" id="614286">
    <property type="type" value="phenotype"/>
</dbReference>
<dbReference type="neXtProt" id="NX_Q01081"/>
<dbReference type="OpenTargets" id="ENSG00000160201"/>
<dbReference type="PharmGKB" id="PA37103"/>
<dbReference type="VEuPathDB" id="HostDB:ENSG00000160201"/>
<dbReference type="eggNOG" id="KOG2202">
    <property type="taxonomic scope" value="Eukaryota"/>
</dbReference>
<dbReference type="GeneTree" id="ENSGT00950000183152"/>
<dbReference type="HOGENOM" id="CLU_059852_4_0_1"/>
<dbReference type="InParanoid" id="Q01081"/>
<dbReference type="OMA" id="NPPMAVA"/>
<dbReference type="OrthoDB" id="9485012at2759"/>
<dbReference type="PAN-GO" id="Q01081">
    <property type="GO annotations" value="4 GO annotations based on evolutionary models"/>
</dbReference>
<dbReference type="PhylomeDB" id="Q01081"/>
<dbReference type="TreeFam" id="TF300143"/>
<dbReference type="PathwayCommons" id="Q01081"/>
<dbReference type="Reactome" id="R-HSA-159236">
    <property type="pathway name" value="Transport of Mature mRNA derived from an Intron-Containing Transcript"/>
</dbReference>
<dbReference type="Reactome" id="R-HSA-72163">
    <property type="pathway name" value="mRNA Splicing - Major Pathway"/>
</dbReference>
<dbReference type="Reactome" id="R-HSA-72187">
    <property type="pathway name" value="mRNA 3'-end processing"/>
</dbReference>
<dbReference type="Reactome" id="R-HSA-73856">
    <property type="pathway name" value="RNA Polymerase II Transcription Termination"/>
</dbReference>
<dbReference type="SignaLink" id="Q01081"/>
<dbReference type="SIGNOR" id="Q01081"/>
<dbReference type="BioGRID-ORCS" id="102724594">
    <property type="hits" value="0 hits in 13 CRISPR screens"/>
</dbReference>
<dbReference type="BioGRID-ORCS" id="7307">
    <property type="hits" value="830 hits in 1158 CRISPR screens"/>
</dbReference>
<dbReference type="CD-CODE" id="804901D1">
    <property type="entry name" value="Nuclear speckle"/>
</dbReference>
<dbReference type="CD-CODE" id="91857CE7">
    <property type="entry name" value="Nucleolus"/>
</dbReference>
<dbReference type="CD-CODE" id="DEE660B4">
    <property type="entry name" value="Stress granule"/>
</dbReference>
<dbReference type="ChiTaRS" id="U2AF1">
    <property type="organism name" value="human"/>
</dbReference>
<dbReference type="EvolutionaryTrace" id="Q01081"/>
<dbReference type="GeneWiki" id="U2_small_nuclear_RNA_auxiliary_factor_1"/>
<dbReference type="Pharos" id="Q01081">
    <property type="development level" value="Tbio"/>
</dbReference>
<dbReference type="PRO" id="PR:Q01081"/>
<dbReference type="Proteomes" id="UP000005640">
    <property type="component" value="Chromosome 21"/>
</dbReference>
<dbReference type="RNAct" id="Q01081">
    <property type="molecule type" value="protein"/>
</dbReference>
<dbReference type="Bgee" id="ENSG00000160201">
    <property type="expression patterns" value="Expressed in adenohypophysis and 99 other cell types or tissues"/>
</dbReference>
<dbReference type="ExpressionAtlas" id="Q01081">
    <property type="expression patterns" value="baseline and differential"/>
</dbReference>
<dbReference type="GO" id="GO:0015030">
    <property type="term" value="C:Cajal body"/>
    <property type="evidence" value="ECO:0000304"/>
    <property type="project" value="ProtInc"/>
</dbReference>
<dbReference type="GO" id="GO:0071013">
    <property type="term" value="C:catalytic step 2 spliceosome"/>
    <property type="evidence" value="ECO:0000314"/>
    <property type="project" value="UniProtKB"/>
</dbReference>
<dbReference type="GO" id="GO:0016607">
    <property type="term" value="C:nuclear speck"/>
    <property type="evidence" value="ECO:0000250"/>
    <property type="project" value="UniProtKB"/>
</dbReference>
<dbReference type="GO" id="GO:0005654">
    <property type="term" value="C:nucleoplasm"/>
    <property type="evidence" value="ECO:0000314"/>
    <property type="project" value="HPA"/>
</dbReference>
<dbReference type="GO" id="GO:0005681">
    <property type="term" value="C:spliceosomal complex"/>
    <property type="evidence" value="ECO:0000314"/>
    <property type="project" value="HGNC-UCL"/>
</dbReference>
<dbReference type="GO" id="GO:0089701">
    <property type="term" value="C:U2AF complex"/>
    <property type="evidence" value="ECO:0000314"/>
    <property type="project" value="GO_Central"/>
</dbReference>
<dbReference type="GO" id="GO:0030628">
    <property type="term" value="F:pre-mRNA 3'-splice site binding"/>
    <property type="evidence" value="ECO:0000318"/>
    <property type="project" value="GO_Central"/>
</dbReference>
<dbReference type="GO" id="GO:0003723">
    <property type="term" value="F:RNA binding"/>
    <property type="evidence" value="ECO:0007005"/>
    <property type="project" value="UniProtKB"/>
</dbReference>
<dbReference type="GO" id="GO:0050733">
    <property type="term" value="F:RS domain binding"/>
    <property type="evidence" value="ECO:0007669"/>
    <property type="project" value="Ensembl"/>
</dbReference>
<dbReference type="GO" id="GO:0008270">
    <property type="term" value="F:zinc ion binding"/>
    <property type="evidence" value="ECO:0007669"/>
    <property type="project" value="UniProtKB-KW"/>
</dbReference>
<dbReference type="GO" id="GO:0006397">
    <property type="term" value="P:mRNA processing"/>
    <property type="evidence" value="ECO:0000304"/>
    <property type="project" value="ProtInc"/>
</dbReference>
<dbReference type="GO" id="GO:0000398">
    <property type="term" value="P:mRNA splicing, via spliceosome"/>
    <property type="evidence" value="ECO:0000318"/>
    <property type="project" value="GO_Central"/>
</dbReference>
<dbReference type="GO" id="GO:0008380">
    <property type="term" value="P:RNA splicing"/>
    <property type="evidence" value="ECO:0000304"/>
    <property type="project" value="ProtInc"/>
</dbReference>
<dbReference type="CDD" id="cd12538">
    <property type="entry name" value="RRM_U2AF35"/>
    <property type="match status" value="1"/>
</dbReference>
<dbReference type="DisProt" id="DP01456"/>
<dbReference type="FunFam" id="3.30.70.330:FF:000055">
    <property type="entry name" value="Splicing factor U2AF 35 kDa subunit"/>
    <property type="match status" value="1"/>
</dbReference>
<dbReference type="Gene3D" id="3.30.70.330">
    <property type="match status" value="1"/>
</dbReference>
<dbReference type="IDEAL" id="IID00205"/>
<dbReference type="InterPro" id="IPR012677">
    <property type="entry name" value="Nucleotide-bd_a/b_plait_sf"/>
</dbReference>
<dbReference type="InterPro" id="IPR035979">
    <property type="entry name" value="RBD_domain_sf"/>
</dbReference>
<dbReference type="InterPro" id="IPR000504">
    <property type="entry name" value="RRM_dom"/>
</dbReference>
<dbReference type="InterPro" id="IPR003954">
    <property type="entry name" value="RRM_dom_euk"/>
</dbReference>
<dbReference type="InterPro" id="IPR009145">
    <property type="entry name" value="U2AF_small"/>
</dbReference>
<dbReference type="InterPro" id="IPR000571">
    <property type="entry name" value="Znf_CCCH"/>
</dbReference>
<dbReference type="PANTHER" id="PTHR12620">
    <property type="entry name" value="U2 SNRNP AUXILIARY FACTOR, SMALL SUBUNIT"/>
    <property type="match status" value="1"/>
</dbReference>
<dbReference type="Pfam" id="PF00076">
    <property type="entry name" value="RRM_1"/>
    <property type="match status" value="1"/>
</dbReference>
<dbReference type="Pfam" id="PF00642">
    <property type="entry name" value="zf-CCCH"/>
    <property type="match status" value="2"/>
</dbReference>
<dbReference type="PRINTS" id="PR01848">
    <property type="entry name" value="U2AUXFACTOR"/>
</dbReference>
<dbReference type="SMART" id="SM00360">
    <property type="entry name" value="RRM"/>
    <property type="match status" value="1"/>
</dbReference>
<dbReference type="SMART" id="SM00361">
    <property type="entry name" value="RRM_1"/>
    <property type="match status" value="1"/>
</dbReference>
<dbReference type="SMART" id="SM00356">
    <property type="entry name" value="ZnF_C3H1"/>
    <property type="match status" value="2"/>
</dbReference>
<dbReference type="SUPFAM" id="SSF54928">
    <property type="entry name" value="RNA-binding domain, RBD"/>
    <property type="match status" value="1"/>
</dbReference>
<dbReference type="PROSITE" id="PS50102">
    <property type="entry name" value="RRM"/>
    <property type="match status" value="1"/>
</dbReference>
<dbReference type="PROSITE" id="PS50103">
    <property type="entry name" value="ZF_C3H1"/>
    <property type="match status" value="2"/>
</dbReference>
<comment type="function">
    <text evidence="9 10 12">Plays a critical role in both constitutive and enhancer-dependent splicing by mediating protein-protein interactions and protein-RNA interactions required for accurate 3'-splice site selection. Recruits U2 snRNP to the branch point. Directly mediates interactions between U2AF2 and proteins bound to the enhancers and thus may function as a bridge between U2AF2 and the enhancer complex to recruit it to the adjacent intron.</text>
</comment>
<comment type="subunit">
    <text evidence="1 5 6 7 11">Identified in the spliceosome C complex (PubMed:11991638). Heterodimer with U2AF2 (PubMed:11551507). Interacts (via RS domain) with PHF5A (via N-terminus) (By similarity). Interacts with ZRANB2 (PubMed:11448987). Interacts with SDE2 (PubMed:34365507). Interacts with SF3B1 (PubMed:34365507).</text>
</comment>
<comment type="interaction">
    <interactant intactId="EBI-632461">
        <id>Q01081</id>
    </interactant>
    <interactant intactId="EBI-11978055">
        <id>Q10567-3</id>
        <label>AP1B1</label>
    </interactant>
    <organismsDiffer>false</organismsDiffer>
    <experiments>3</experiments>
</comment>
<comment type="interaction">
    <interactant intactId="EBI-632461">
        <id>Q01081</id>
    </interactant>
    <interactant intactId="EBI-432924">
        <id>P63010</id>
        <label>AP2B1</label>
    </interactant>
    <organismsDiffer>false</organismsDiffer>
    <experiments>3</experiments>
</comment>
<comment type="interaction">
    <interactant intactId="EBI-632461">
        <id>Q01081</id>
    </interactant>
    <interactant intactId="EBI-11529439">
        <id>P63010-2</id>
        <label>AP2B1</label>
    </interactant>
    <organismsDiffer>false</organismsDiffer>
    <experiments>3</experiments>
</comment>
<comment type="interaction">
    <interactant intactId="EBI-632461">
        <id>Q01081</id>
    </interactant>
    <interactant intactId="EBI-930964">
        <id>P54253</id>
        <label>ATXN1</label>
    </interactant>
    <organismsDiffer>false</organismsDiffer>
    <experiments>4</experiments>
</comment>
<comment type="interaction">
    <interactant intactId="EBI-632461">
        <id>Q01081</id>
    </interactant>
    <interactant intactId="EBI-11963218">
        <id>Q8N4J0</id>
        <label>CARNMT1</label>
    </interactant>
    <organismsDiffer>false</organismsDiffer>
    <experiments>7</experiments>
</comment>
<comment type="interaction">
    <interactant intactId="EBI-632461">
        <id>Q01081</id>
    </interactant>
    <interactant intactId="EBI-627102">
        <id>Q86X95</id>
        <label>CIR1</label>
    </interactant>
    <organismsDiffer>false</organismsDiffer>
    <experiments>4</experiments>
</comment>
<comment type="interaction">
    <interactant intactId="EBI-632461">
        <id>Q01081</id>
    </interactant>
    <interactant intactId="EBI-2349927">
        <id>Q5JST6</id>
        <label>EFHC2</label>
    </interactant>
    <organismsDiffer>false</organismsDiffer>
    <experiments>3</experiments>
</comment>
<comment type="interaction">
    <interactant intactId="EBI-632461">
        <id>Q01081</id>
    </interactant>
    <interactant intactId="EBI-304185">
        <id>P61978</id>
        <label>HNRNPK</label>
    </interactant>
    <organismsDiffer>false</organismsDiffer>
    <experiments>4</experiments>
</comment>
<comment type="interaction">
    <interactant intactId="EBI-632461">
        <id>Q01081</id>
    </interactant>
    <interactant intactId="EBI-466029">
        <id>P42858</id>
        <label>HTT</label>
    </interactant>
    <organismsDiffer>false</organismsDiffer>
    <experiments>3</experiments>
</comment>
<comment type="interaction">
    <interactant intactId="EBI-632461">
        <id>Q01081</id>
    </interactant>
    <interactant intactId="EBI-8464037">
        <id>Q6NYC1</id>
        <label>JMJD6</label>
    </interactant>
    <organismsDiffer>false</organismsDiffer>
    <experiments>4</experiments>
</comment>
<comment type="interaction">
    <interactant intactId="EBI-632461">
        <id>Q01081</id>
    </interactant>
    <interactant intactId="EBI-298429">
        <id>P04264</id>
        <label>KRT1</label>
    </interactant>
    <organismsDiffer>false</organismsDiffer>
    <experiments>3</experiments>
</comment>
<comment type="interaction">
    <interactant intactId="EBI-632461">
        <id>Q01081</id>
    </interactant>
    <interactant intactId="EBI-2949715">
        <id>O95678</id>
        <label>KRT75</label>
    </interactant>
    <organismsDiffer>false</organismsDiffer>
    <experiments>3</experiments>
</comment>
<comment type="interaction">
    <interactant intactId="EBI-632461">
        <id>Q01081</id>
    </interactant>
    <interactant intactId="EBI-16439278">
        <id>Q6FHY5</id>
        <label>MEOX2</label>
    </interactant>
    <organismsDiffer>false</organismsDiffer>
    <experiments>3</experiments>
</comment>
<comment type="interaction">
    <interactant intactId="EBI-632461">
        <id>Q01081</id>
    </interactant>
    <interactant intactId="EBI-744248">
        <id>P40692</id>
        <label>MLH1</label>
    </interactant>
    <organismsDiffer>false</organismsDiffer>
    <experiments>3</experiments>
</comment>
<comment type="interaction">
    <interactant intactId="EBI-632461">
        <id>Q01081</id>
    </interactant>
    <interactant intactId="EBI-721539">
        <id>Q8N5F7</id>
        <label>NKAP</label>
    </interactant>
    <organismsDiffer>false</organismsDiffer>
    <experiments>2</experiments>
</comment>
<comment type="interaction">
    <interactant intactId="EBI-632461">
        <id>Q01081</id>
    </interactant>
    <interactant intactId="EBI-347495">
        <id>P82979</id>
        <label>SARNP</label>
    </interactant>
    <organismsDiffer>false</organismsDiffer>
    <experiments>3</experiments>
</comment>
<comment type="interaction">
    <interactant intactId="EBI-632461">
        <id>Q01081</id>
    </interactant>
    <interactant intactId="EBI-749111">
        <id>Q13435</id>
        <label>SF3B2</label>
    </interactant>
    <organismsDiffer>false</organismsDiffer>
    <experiments>2</experiments>
</comment>
<comment type="interaction">
    <interactant intactId="EBI-632461">
        <id>Q01081</id>
    </interactant>
    <interactant intactId="EBI-12938570">
        <id>Q16560-2</id>
        <label>SNRNP35</label>
    </interactant>
    <organismsDiffer>false</organismsDiffer>
    <experiments>3</experiments>
</comment>
<comment type="interaction">
    <interactant intactId="EBI-632461">
        <id>Q01081</id>
    </interactant>
    <interactant intactId="EBI-539478">
        <id>Q96SB4</id>
        <label>SRPK1</label>
    </interactant>
    <organismsDiffer>false</organismsDiffer>
    <experiments>4</experiments>
</comment>
<comment type="interaction">
    <interactant intactId="EBI-632461">
        <id>Q01081</id>
    </interactant>
    <interactant intactId="EBI-593303">
        <id>P78362</id>
        <label>SRPK2</label>
    </interactant>
    <organismsDiffer>false</organismsDiffer>
    <experiments>8</experiments>
</comment>
<comment type="interaction">
    <interactant intactId="EBI-632461">
        <id>Q01081</id>
    </interactant>
    <interactant intactId="EBI-3867173">
        <id>A7MD48</id>
        <label>SRRM4</label>
    </interactant>
    <organismsDiffer>false</organismsDiffer>
    <experiments>3</experiments>
</comment>
<comment type="interaction">
    <interactant intactId="EBI-632461">
        <id>Q01081</id>
    </interactant>
    <interactant intactId="EBI-398920">
        <id>Q07955</id>
        <label>SRSF1</label>
    </interactant>
    <organismsDiffer>false</organismsDiffer>
    <experiments>4</experiments>
</comment>
<comment type="interaction">
    <interactant intactId="EBI-632461">
        <id>Q01081</id>
    </interactant>
    <interactant intactId="EBI-627047">
        <id>Q01130</id>
        <label>SRSF2</label>
    </interactant>
    <organismsDiffer>false</organismsDiffer>
    <experiments>3</experiments>
</comment>
<comment type="interaction">
    <interactant intactId="EBI-632461">
        <id>Q01081</id>
    </interactant>
    <interactant intactId="EBI-372557">
        <id>P84103</id>
        <label>SRSF3</label>
    </interactant>
    <organismsDiffer>false</organismsDiffer>
    <experiments>5</experiments>
</comment>
<comment type="interaction">
    <interactant intactId="EBI-632461">
        <id>Q01081</id>
    </interactant>
    <interactant intactId="EBI-349968">
        <id>O43463</id>
        <label>SUV39H1</label>
    </interactant>
    <organismsDiffer>false</organismsDiffer>
    <experiments>2</experiments>
</comment>
<comment type="interaction">
    <interactant intactId="EBI-632461">
        <id>Q01081</id>
    </interactant>
    <interactant intactId="EBI-725485">
        <id>P62995</id>
        <label>TRA2B</label>
    </interactant>
    <organismsDiffer>false</organismsDiffer>
    <experiments>3</experiments>
</comment>
<comment type="interaction">
    <interactant intactId="EBI-632461">
        <id>Q01081</id>
    </interactant>
    <interactant intactId="EBI-742339">
        <id>P26368</id>
        <label>U2AF2</label>
    </interactant>
    <organismsDiffer>false</organismsDiffer>
    <experiments>14</experiments>
</comment>
<comment type="interaction">
    <interactant intactId="EBI-632461">
        <id>Q01081</id>
    </interactant>
    <interactant intactId="EBI-11097439">
        <id>P26368-2</id>
        <label>U2AF2</label>
    </interactant>
    <organismsDiffer>false</organismsDiffer>
    <experiments>8</experiments>
</comment>
<comment type="interaction">
    <interactant intactId="EBI-632461">
        <id>Q01081</id>
    </interactant>
    <interactant intactId="EBI-740727">
        <id>Q8TAU3</id>
        <label>ZNF417</label>
    </interactant>
    <organismsDiffer>false</organismsDiffer>
    <experiments>3</experiments>
</comment>
<comment type="interaction">
    <interactant intactId="EBI-10176676">
        <id>Q01081-2</id>
    </interactant>
    <interactant intactId="EBI-750020">
        <id>P49760</id>
        <label>CLK2</label>
    </interactant>
    <organismsDiffer>false</organismsDiffer>
    <experiments>3</experiments>
</comment>
<comment type="interaction">
    <interactant intactId="EBI-10176676">
        <id>Q01081-2</id>
    </interactant>
    <interactant intactId="EBI-10176640">
        <id>D3DU92</id>
        <label>rnps1</label>
    </interactant>
    <organismsDiffer>false</organismsDiffer>
    <experiments>3</experiments>
</comment>
<comment type="interaction">
    <interactant intactId="EBI-10176676">
        <id>Q01081-2</id>
    </interactant>
    <interactant intactId="EBI-593303">
        <id>P78362</id>
        <label>SRPK2</label>
    </interactant>
    <organismsDiffer>false</organismsDiffer>
    <experiments>3</experiments>
</comment>
<comment type="subcellular location">
    <subcellularLocation>
        <location evidence="8">Nucleus</location>
    </subcellularLocation>
    <subcellularLocation>
        <location evidence="8 10">Nucleus speckle</location>
    </subcellularLocation>
</comment>
<comment type="alternative products">
    <event type="alternative splicing"/>
    <isoform>
        <id>Q01081-1</id>
        <name>1</name>
        <name>U2AF35a</name>
        <sequence type="displayed"/>
    </isoform>
    <isoform>
        <id>Q01081-2</id>
        <name>2</name>
        <name>U2AF35b</name>
        <sequence type="described" ref="VSP_042665"/>
    </isoform>
    <isoform>
        <id>Q01081-3</id>
        <name>3</name>
        <name>U2AF35c</name>
        <sequence type="described" ref="VSP_042665 VSP_042666 VSP_042667"/>
    </isoform>
    <isoform>
        <id>Q01081-4</id>
        <name>4</name>
        <sequence type="described" ref="VSP_042664"/>
    </isoform>
</comment>
<comment type="domain">
    <text>The C-terminal SR-rich domain is required for interactions with SR proteins and the splicing regulators TRA and TRA2, and the N-terminal domain is required for formation of the U2AF1/U2AF2 heterodimer.</text>
</comment>
<comment type="disease" evidence="9 10">
    <disease id="DI-03291">
        <name>Myelodysplastic syndrome</name>
        <acronym>MDS</acronym>
        <description>A heterogeneous group of closely related clonal hematopoietic disorders. All are characterized by a hypercellular or hypocellular bone marrow with impaired morphology and maturation, dysplasia of the myeloid, megakaryocytic and/or erythroid lineages, and peripheral blood cytopenias resulting from ineffective blood cell production. Included diseases are: refractory anemia (RA), refractory anemia with ringed sideroblasts (RARS), refractory anemia with excess blasts (RAEB), refractory cytopenia with multilineage dysplasia and ringed sideroblasts (RCMD-RS); chronic myelomonocytic leukemia (CMML) is a myelodysplastic/myeloproliferative disease. MDS is considered a premalignant condition in a subgroup of patients that often progresses to acute myeloid leukemia (AML).</description>
        <dbReference type="MIM" id="614286"/>
    </disease>
    <text evidence="10">The gene represented in this entry may be involved in disease pathogenesis. Mutation altering U2AF1 function in the context of specific RNA sequences can lead to aberrant alternative splicing of target genes, some of which may be relevant for MDS pathogenesis.</text>
</comment>
<comment type="miscellaneous">
    <molecule>Isoform 2</molecule>
    <text evidence="16">Interacts with U2AF2 and stimulates U2AF splicing activity in vitro. Less efficient than isoform 1.</text>
</comment>
<comment type="miscellaneous">
    <molecule>Isoform 3</molecule>
    <text evidence="16">Produced at very low levels due to a premature stop codon in the mRNA, leading to nonsense-mediated mRNA decay.</text>
</comment>
<comment type="similarity">
    <text evidence="16">Belongs to the splicing factor SR family.</text>
</comment>
<accession>Q01081</accession>
<accession>Q701P4</accession>
<accession>Q71RF1</accession>
<gene>
    <name type="primary">U2AF1</name>
    <name type="synonym">U2AF35</name>
    <name type="synonym">U2AFBP</name>
    <name type="ORF">FP793</name>
</gene>